<accession>B1ZGP4</accession>
<reference key="1">
    <citation type="submission" date="2008-04" db="EMBL/GenBank/DDBJ databases">
        <title>Complete sequence of chromosome of Methylobacterium populi BJ001.</title>
        <authorList>
            <consortium name="US DOE Joint Genome Institute"/>
            <person name="Copeland A."/>
            <person name="Lucas S."/>
            <person name="Lapidus A."/>
            <person name="Glavina del Rio T."/>
            <person name="Dalin E."/>
            <person name="Tice H."/>
            <person name="Bruce D."/>
            <person name="Goodwin L."/>
            <person name="Pitluck S."/>
            <person name="Chertkov O."/>
            <person name="Brettin T."/>
            <person name="Detter J.C."/>
            <person name="Han C."/>
            <person name="Kuske C.R."/>
            <person name="Schmutz J."/>
            <person name="Larimer F."/>
            <person name="Land M."/>
            <person name="Hauser L."/>
            <person name="Kyrpides N."/>
            <person name="Mikhailova N."/>
            <person name="Marx C."/>
            <person name="Richardson P."/>
        </authorList>
    </citation>
    <scope>NUCLEOTIDE SEQUENCE [LARGE SCALE GENOMIC DNA]</scope>
    <source>
        <strain>ATCC BAA-705 / NCIMB 13946 / BJ001</strain>
    </source>
</reference>
<proteinExistence type="inferred from homology"/>
<keyword id="KW-0131">Cell cycle</keyword>
<keyword id="KW-0132">Cell division</keyword>
<keyword id="KW-0997">Cell inner membrane</keyword>
<keyword id="KW-1003">Cell membrane</keyword>
<keyword id="KW-0133">Cell shape</keyword>
<keyword id="KW-0961">Cell wall biogenesis/degradation</keyword>
<keyword id="KW-0328">Glycosyltransferase</keyword>
<keyword id="KW-0472">Membrane</keyword>
<keyword id="KW-0573">Peptidoglycan synthesis</keyword>
<keyword id="KW-0808">Transferase</keyword>
<sequence>MTVFTPLVLVCAGGTGGHLFPAQSLAYALKARGIRVALATDARVDSIAGDFPAEEIVTIASATPSGRSMLRRAGAVLTLGRGFGQAARAVRRLNPAAVVGFGGYPTVPPMLAAQLLRVPTILHEQNAVMGRANGFLAKGAQVIATGFKEVRGVPEKATARRIHTGNPIRPSVLAVAETPYPALDEGSPLRLLVFGGSQGARVMSEIVPAAIEKLPQDLRARLHLVQQARPEDLTATQNRYLAMGLGGIEAAPFFKDLPGRMAAAHLVVARSGASTVSELAAIGRPAILVPLPGALDQDQAANAATLAQIGAALSIPQSAFTPDRLAAELVDLFEAPRKLTQAAAAAKTARILDAADRLATLVAETAAATS</sequence>
<name>MURG_METPB</name>
<feature type="chain" id="PRO_1000090447" description="UDP-N-acetylglucosamine--N-acetylmuramyl-(pentapeptide) pyrophosphoryl-undecaprenol N-acetylglucosamine transferase">
    <location>
        <begin position="1"/>
        <end position="370"/>
    </location>
</feature>
<feature type="binding site" evidence="1">
    <location>
        <begin position="15"/>
        <end position="17"/>
    </location>
    <ligand>
        <name>UDP-N-acetyl-alpha-D-glucosamine</name>
        <dbReference type="ChEBI" id="CHEBI:57705"/>
    </ligand>
</feature>
<feature type="binding site" evidence="1">
    <location>
        <position position="126"/>
    </location>
    <ligand>
        <name>UDP-N-acetyl-alpha-D-glucosamine</name>
        <dbReference type="ChEBI" id="CHEBI:57705"/>
    </ligand>
</feature>
<feature type="binding site" evidence="1">
    <location>
        <position position="169"/>
    </location>
    <ligand>
        <name>UDP-N-acetyl-alpha-D-glucosamine</name>
        <dbReference type="ChEBI" id="CHEBI:57705"/>
    </ligand>
</feature>
<feature type="binding site" evidence="1">
    <location>
        <position position="197"/>
    </location>
    <ligand>
        <name>UDP-N-acetyl-alpha-D-glucosamine</name>
        <dbReference type="ChEBI" id="CHEBI:57705"/>
    </ligand>
</feature>
<feature type="binding site" evidence="1">
    <location>
        <position position="299"/>
    </location>
    <ligand>
        <name>UDP-N-acetyl-alpha-D-glucosamine</name>
        <dbReference type="ChEBI" id="CHEBI:57705"/>
    </ligand>
</feature>
<protein>
    <recommendedName>
        <fullName evidence="1">UDP-N-acetylglucosamine--N-acetylmuramyl-(pentapeptide) pyrophosphoryl-undecaprenol N-acetylglucosamine transferase</fullName>
        <ecNumber evidence="1">2.4.1.227</ecNumber>
    </recommendedName>
    <alternativeName>
        <fullName evidence="1">Undecaprenyl-PP-MurNAc-pentapeptide-UDPGlcNAc GlcNAc transferase</fullName>
    </alternativeName>
</protein>
<gene>
    <name evidence="1" type="primary">murG</name>
    <name type="ordered locus">Mpop_3124</name>
</gene>
<dbReference type="EC" id="2.4.1.227" evidence="1"/>
<dbReference type="EMBL" id="CP001029">
    <property type="protein sequence ID" value="ACB81277.1"/>
    <property type="molecule type" value="Genomic_DNA"/>
</dbReference>
<dbReference type="RefSeq" id="WP_012454995.1">
    <property type="nucleotide sequence ID" value="NC_010725.1"/>
</dbReference>
<dbReference type="SMR" id="B1ZGP4"/>
<dbReference type="STRING" id="441620.Mpop_3124"/>
<dbReference type="CAZy" id="GT28">
    <property type="family name" value="Glycosyltransferase Family 28"/>
</dbReference>
<dbReference type="KEGG" id="mpo:Mpop_3124"/>
<dbReference type="eggNOG" id="COG0707">
    <property type="taxonomic scope" value="Bacteria"/>
</dbReference>
<dbReference type="HOGENOM" id="CLU_037404_2_1_5"/>
<dbReference type="OrthoDB" id="9808936at2"/>
<dbReference type="UniPathway" id="UPA00219"/>
<dbReference type="Proteomes" id="UP000007136">
    <property type="component" value="Chromosome"/>
</dbReference>
<dbReference type="GO" id="GO:0005886">
    <property type="term" value="C:plasma membrane"/>
    <property type="evidence" value="ECO:0007669"/>
    <property type="project" value="UniProtKB-SubCell"/>
</dbReference>
<dbReference type="GO" id="GO:0051991">
    <property type="term" value="F:UDP-N-acetyl-D-glucosamine:N-acetylmuramoyl-L-alanyl-D-glutamyl-meso-2,6-diaminopimelyl-D-alanyl-D-alanine-diphosphoundecaprenol 4-beta-N-acetylglucosaminlytransferase activity"/>
    <property type="evidence" value="ECO:0007669"/>
    <property type="project" value="RHEA"/>
</dbReference>
<dbReference type="GO" id="GO:0050511">
    <property type="term" value="F:undecaprenyldiphospho-muramoylpentapeptide beta-N-acetylglucosaminyltransferase activity"/>
    <property type="evidence" value="ECO:0007669"/>
    <property type="project" value="UniProtKB-UniRule"/>
</dbReference>
<dbReference type="GO" id="GO:0005975">
    <property type="term" value="P:carbohydrate metabolic process"/>
    <property type="evidence" value="ECO:0007669"/>
    <property type="project" value="InterPro"/>
</dbReference>
<dbReference type="GO" id="GO:0051301">
    <property type="term" value="P:cell division"/>
    <property type="evidence" value="ECO:0007669"/>
    <property type="project" value="UniProtKB-KW"/>
</dbReference>
<dbReference type="GO" id="GO:0071555">
    <property type="term" value="P:cell wall organization"/>
    <property type="evidence" value="ECO:0007669"/>
    <property type="project" value="UniProtKB-KW"/>
</dbReference>
<dbReference type="GO" id="GO:0030259">
    <property type="term" value="P:lipid glycosylation"/>
    <property type="evidence" value="ECO:0007669"/>
    <property type="project" value="UniProtKB-UniRule"/>
</dbReference>
<dbReference type="GO" id="GO:0009252">
    <property type="term" value="P:peptidoglycan biosynthetic process"/>
    <property type="evidence" value="ECO:0007669"/>
    <property type="project" value="UniProtKB-UniRule"/>
</dbReference>
<dbReference type="GO" id="GO:0008360">
    <property type="term" value="P:regulation of cell shape"/>
    <property type="evidence" value="ECO:0007669"/>
    <property type="project" value="UniProtKB-KW"/>
</dbReference>
<dbReference type="CDD" id="cd03785">
    <property type="entry name" value="GT28_MurG"/>
    <property type="match status" value="1"/>
</dbReference>
<dbReference type="Gene3D" id="3.40.50.2000">
    <property type="entry name" value="Glycogen Phosphorylase B"/>
    <property type="match status" value="2"/>
</dbReference>
<dbReference type="HAMAP" id="MF_00033">
    <property type="entry name" value="MurG"/>
    <property type="match status" value="1"/>
</dbReference>
<dbReference type="InterPro" id="IPR006009">
    <property type="entry name" value="GlcNAc_MurG"/>
</dbReference>
<dbReference type="InterPro" id="IPR007235">
    <property type="entry name" value="Glyco_trans_28_C"/>
</dbReference>
<dbReference type="InterPro" id="IPR004276">
    <property type="entry name" value="GlycoTrans_28_N"/>
</dbReference>
<dbReference type="NCBIfam" id="TIGR01133">
    <property type="entry name" value="murG"/>
    <property type="match status" value="1"/>
</dbReference>
<dbReference type="PANTHER" id="PTHR21015:SF22">
    <property type="entry name" value="GLYCOSYLTRANSFERASE"/>
    <property type="match status" value="1"/>
</dbReference>
<dbReference type="PANTHER" id="PTHR21015">
    <property type="entry name" value="UDP-N-ACETYLGLUCOSAMINE--N-ACETYLMURAMYL-(PENTAPEPTIDE) PYROPHOSPHORYL-UNDECAPRENOL N-ACETYLGLUCOSAMINE TRANSFERASE 1"/>
    <property type="match status" value="1"/>
</dbReference>
<dbReference type="Pfam" id="PF04101">
    <property type="entry name" value="Glyco_tran_28_C"/>
    <property type="match status" value="1"/>
</dbReference>
<dbReference type="Pfam" id="PF03033">
    <property type="entry name" value="Glyco_transf_28"/>
    <property type="match status" value="1"/>
</dbReference>
<dbReference type="SUPFAM" id="SSF53756">
    <property type="entry name" value="UDP-Glycosyltransferase/glycogen phosphorylase"/>
    <property type="match status" value="1"/>
</dbReference>
<organism>
    <name type="scientific">Methylorubrum populi (strain ATCC BAA-705 / NCIMB 13946 / BJ001)</name>
    <name type="common">Methylobacterium populi</name>
    <dbReference type="NCBI Taxonomy" id="441620"/>
    <lineage>
        <taxon>Bacteria</taxon>
        <taxon>Pseudomonadati</taxon>
        <taxon>Pseudomonadota</taxon>
        <taxon>Alphaproteobacteria</taxon>
        <taxon>Hyphomicrobiales</taxon>
        <taxon>Methylobacteriaceae</taxon>
        <taxon>Methylorubrum</taxon>
    </lineage>
</organism>
<comment type="function">
    <text evidence="1">Cell wall formation. Catalyzes the transfer of a GlcNAc subunit on undecaprenyl-pyrophosphoryl-MurNAc-pentapeptide (lipid intermediate I) to form undecaprenyl-pyrophosphoryl-MurNAc-(pentapeptide)GlcNAc (lipid intermediate II).</text>
</comment>
<comment type="catalytic activity">
    <reaction evidence="1">
        <text>di-trans,octa-cis-undecaprenyl diphospho-N-acetyl-alpha-D-muramoyl-L-alanyl-D-glutamyl-meso-2,6-diaminopimeloyl-D-alanyl-D-alanine + UDP-N-acetyl-alpha-D-glucosamine = di-trans,octa-cis-undecaprenyl diphospho-[N-acetyl-alpha-D-glucosaminyl-(1-&gt;4)]-N-acetyl-alpha-D-muramoyl-L-alanyl-D-glutamyl-meso-2,6-diaminopimeloyl-D-alanyl-D-alanine + UDP + H(+)</text>
        <dbReference type="Rhea" id="RHEA:31227"/>
        <dbReference type="ChEBI" id="CHEBI:15378"/>
        <dbReference type="ChEBI" id="CHEBI:57705"/>
        <dbReference type="ChEBI" id="CHEBI:58223"/>
        <dbReference type="ChEBI" id="CHEBI:61387"/>
        <dbReference type="ChEBI" id="CHEBI:61388"/>
        <dbReference type="EC" id="2.4.1.227"/>
    </reaction>
</comment>
<comment type="pathway">
    <text evidence="1">Cell wall biogenesis; peptidoglycan biosynthesis.</text>
</comment>
<comment type="subcellular location">
    <subcellularLocation>
        <location evidence="1">Cell inner membrane</location>
        <topology evidence="1">Peripheral membrane protein</topology>
        <orientation evidence="1">Cytoplasmic side</orientation>
    </subcellularLocation>
</comment>
<comment type="similarity">
    <text evidence="1">Belongs to the glycosyltransferase 28 family. MurG subfamily.</text>
</comment>
<evidence type="ECO:0000255" key="1">
    <source>
        <dbReference type="HAMAP-Rule" id="MF_00033"/>
    </source>
</evidence>